<protein>
    <recommendedName>
        <fullName evidence="1">Serine--tRNA ligase</fullName>
        <ecNumber evidence="1">6.1.1.11</ecNumber>
    </recommendedName>
    <alternativeName>
        <fullName evidence="1">Seryl-tRNA synthetase</fullName>
        <shortName evidence="1">SerRS</shortName>
    </alternativeName>
    <alternativeName>
        <fullName evidence="1">Seryl-tRNA(Ser/Sec) synthetase</fullName>
    </alternativeName>
</protein>
<accession>Q9I0M6</accession>
<evidence type="ECO:0000255" key="1">
    <source>
        <dbReference type="HAMAP-Rule" id="MF_00176"/>
    </source>
</evidence>
<evidence type="ECO:0007829" key="2">
    <source>
        <dbReference type="PDB" id="6HDZ"/>
    </source>
</evidence>
<gene>
    <name evidence="1" type="primary">serS</name>
    <name type="ordered locus">PA2612</name>
</gene>
<organism>
    <name type="scientific">Pseudomonas aeruginosa (strain ATCC 15692 / DSM 22644 / CIP 104116 / JCM 14847 / LMG 12228 / 1C / PRS 101 / PAO1)</name>
    <dbReference type="NCBI Taxonomy" id="208964"/>
    <lineage>
        <taxon>Bacteria</taxon>
        <taxon>Pseudomonadati</taxon>
        <taxon>Pseudomonadota</taxon>
        <taxon>Gammaproteobacteria</taxon>
        <taxon>Pseudomonadales</taxon>
        <taxon>Pseudomonadaceae</taxon>
        <taxon>Pseudomonas</taxon>
    </lineage>
</organism>
<keyword id="KW-0002">3D-structure</keyword>
<keyword id="KW-0030">Aminoacyl-tRNA synthetase</keyword>
<keyword id="KW-0067">ATP-binding</keyword>
<keyword id="KW-0963">Cytoplasm</keyword>
<keyword id="KW-0436">Ligase</keyword>
<keyword id="KW-0547">Nucleotide-binding</keyword>
<keyword id="KW-0648">Protein biosynthesis</keyword>
<keyword id="KW-1185">Reference proteome</keyword>
<feature type="chain" id="PRO_0000122101" description="Serine--tRNA ligase">
    <location>
        <begin position="1"/>
        <end position="426"/>
    </location>
</feature>
<feature type="binding site" evidence="1">
    <location>
        <begin position="233"/>
        <end position="235"/>
    </location>
    <ligand>
        <name>L-serine</name>
        <dbReference type="ChEBI" id="CHEBI:33384"/>
    </ligand>
</feature>
<feature type="binding site" evidence="1">
    <location>
        <begin position="264"/>
        <end position="266"/>
    </location>
    <ligand>
        <name>ATP</name>
        <dbReference type="ChEBI" id="CHEBI:30616"/>
    </ligand>
</feature>
<feature type="binding site" evidence="1">
    <location>
        <position position="287"/>
    </location>
    <ligand>
        <name>L-serine</name>
        <dbReference type="ChEBI" id="CHEBI:33384"/>
    </ligand>
</feature>
<feature type="binding site" evidence="1">
    <location>
        <begin position="351"/>
        <end position="354"/>
    </location>
    <ligand>
        <name>ATP</name>
        <dbReference type="ChEBI" id="CHEBI:30616"/>
    </ligand>
</feature>
<feature type="binding site" evidence="1">
    <location>
        <position position="387"/>
    </location>
    <ligand>
        <name>L-serine</name>
        <dbReference type="ChEBI" id="CHEBI:33384"/>
    </ligand>
</feature>
<feature type="helix" evidence="2">
    <location>
        <begin position="4"/>
        <end position="9"/>
    </location>
</feature>
<feature type="helix" evidence="2">
    <location>
        <begin position="11"/>
        <end position="19"/>
    </location>
</feature>
<feature type="turn" evidence="2">
    <location>
        <begin position="20"/>
        <end position="22"/>
    </location>
</feature>
<feature type="helix" evidence="2">
    <location>
        <begin position="27"/>
        <end position="63"/>
    </location>
</feature>
<feature type="helix" evidence="2">
    <location>
        <begin position="69"/>
        <end position="100"/>
    </location>
</feature>
<feature type="helix" evidence="2">
    <location>
        <begin position="117"/>
        <end position="119"/>
    </location>
</feature>
<feature type="strand" evidence="2">
    <location>
        <begin position="121"/>
        <end position="127"/>
    </location>
</feature>
<feature type="helix" evidence="2">
    <location>
        <begin position="139"/>
        <end position="144"/>
    </location>
</feature>
<feature type="turn" evidence="2">
    <location>
        <begin position="145"/>
        <end position="147"/>
    </location>
</feature>
<feature type="strand" evidence="2">
    <location>
        <begin position="148"/>
        <end position="150"/>
    </location>
</feature>
<feature type="helix" evidence="2">
    <location>
        <begin position="151"/>
        <end position="158"/>
    </location>
</feature>
<feature type="strand" evidence="2">
    <location>
        <begin position="164"/>
        <end position="166"/>
    </location>
</feature>
<feature type="helix" evidence="2">
    <location>
        <begin position="167"/>
        <end position="187"/>
    </location>
</feature>
<feature type="strand" evidence="2">
    <location>
        <begin position="191"/>
        <end position="194"/>
    </location>
</feature>
<feature type="strand" evidence="2">
    <location>
        <begin position="197"/>
        <end position="199"/>
    </location>
</feature>
<feature type="helix" evidence="2">
    <location>
        <begin position="201"/>
        <end position="207"/>
    </location>
</feature>
<feature type="turn" evidence="2">
    <location>
        <begin position="210"/>
        <end position="213"/>
    </location>
</feature>
<feature type="helix" evidence="2">
    <location>
        <begin position="214"/>
        <end position="216"/>
    </location>
</feature>
<feature type="strand" evidence="2">
    <location>
        <begin position="228"/>
        <end position="230"/>
    </location>
</feature>
<feature type="helix" evidence="2">
    <location>
        <begin position="234"/>
        <end position="239"/>
    </location>
</feature>
<feature type="helix" evidence="2">
    <location>
        <begin position="240"/>
        <end position="242"/>
    </location>
</feature>
<feature type="strand" evidence="2">
    <location>
        <begin position="246"/>
        <end position="248"/>
    </location>
</feature>
<feature type="helix" evidence="2">
    <location>
        <begin position="249"/>
        <end position="251"/>
    </location>
</feature>
<feature type="strand" evidence="2">
    <location>
        <begin position="253"/>
        <end position="263"/>
    </location>
</feature>
<feature type="strand" evidence="2">
    <location>
        <begin position="275"/>
        <end position="279"/>
    </location>
</feature>
<feature type="strand" evidence="2">
    <location>
        <begin position="281"/>
        <end position="292"/>
    </location>
</feature>
<feature type="helix" evidence="2">
    <location>
        <begin position="294"/>
        <end position="296"/>
    </location>
</feature>
<feature type="helix" evidence="2">
    <location>
        <begin position="297"/>
        <end position="314"/>
    </location>
</feature>
<feature type="strand" evidence="2">
    <location>
        <begin position="319"/>
        <end position="323"/>
    </location>
</feature>
<feature type="helix" evidence="2">
    <location>
        <begin position="326"/>
        <end position="328"/>
    </location>
</feature>
<feature type="strand" evidence="2">
    <location>
        <begin position="334"/>
        <end position="342"/>
    </location>
</feature>
<feature type="helix" evidence="2">
    <location>
        <begin position="344"/>
        <end position="346"/>
    </location>
</feature>
<feature type="strand" evidence="2">
    <location>
        <begin position="347"/>
        <end position="359"/>
    </location>
</feature>
<feature type="helix" evidence="2">
    <location>
        <begin position="361"/>
        <end position="366"/>
    </location>
</feature>
<feature type="strand" evidence="2">
    <location>
        <begin position="369"/>
        <end position="371"/>
    </location>
</feature>
<feature type="turn" evidence="2">
    <location>
        <begin position="373"/>
        <end position="375"/>
    </location>
</feature>
<feature type="strand" evidence="2">
    <location>
        <begin position="377"/>
        <end position="380"/>
    </location>
</feature>
<feature type="strand" evidence="2">
    <location>
        <begin position="382"/>
        <end position="390"/>
    </location>
</feature>
<feature type="helix" evidence="2">
    <location>
        <begin position="391"/>
        <end position="401"/>
    </location>
</feature>
<feature type="helix" evidence="2">
    <location>
        <begin position="413"/>
        <end position="418"/>
    </location>
</feature>
<feature type="turn" evidence="2">
    <location>
        <begin position="419"/>
        <end position="421"/>
    </location>
</feature>
<reference key="1">
    <citation type="journal article" date="2000" name="Nature">
        <title>Complete genome sequence of Pseudomonas aeruginosa PAO1, an opportunistic pathogen.</title>
        <authorList>
            <person name="Stover C.K."/>
            <person name="Pham X.-Q.T."/>
            <person name="Erwin A.L."/>
            <person name="Mizoguchi S.D."/>
            <person name="Warrener P."/>
            <person name="Hickey M.J."/>
            <person name="Brinkman F.S.L."/>
            <person name="Hufnagle W.O."/>
            <person name="Kowalik D.J."/>
            <person name="Lagrou M."/>
            <person name="Garber R.L."/>
            <person name="Goltry L."/>
            <person name="Tolentino E."/>
            <person name="Westbrock-Wadman S."/>
            <person name="Yuan Y."/>
            <person name="Brody L.L."/>
            <person name="Coulter S.N."/>
            <person name="Folger K.R."/>
            <person name="Kas A."/>
            <person name="Larbig K."/>
            <person name="Lim R.M."/>
            <person name="Smith K.A."/>
            <person name="Spencer D.H."/>
            <person name="Wong G.K.-S."/>
            <person name="Wu Z."/>
            <person name="Paulsen I.T."/>
            <person name="Reizer J."/>
            <person name="Saier M.H. Jr."/>
            <person name="Hancock R.E.W."/>
            <person name="Lory S."/>
            <person name="Olson M.V."/>
        </authorList>
    </citation>
    <scope>NUCLEOTIDE SEQUENCE [LARGE SCALE GENOMIC DNA]</scope>
    <source>
        <strain>ATCC 15692 / DSM 22644 / CIP 104116 / JCM 14847 / LMG 12228 / 1C / PRS 101 / PAO1</strain>
    </source>
</reference>
<proteinExistence type="evidence at protein level"/>
<comment type="function">
    <text evidence="1">Catalyzes the attachment of serine to tRNA(Ser). Is also able to aminoacylate tRNA(Sec) with serine, to form the misacylated tRNA L-seryl-tRNA(Sec), which will be further converted into selenocysteinyl-tRNA(Sec).</text>
</comment>
<comment type="catalytic activity">
    <reaction evidence="1">
        <text>tRNA(Ser) + L-serine + ATP = L-seryl-tRNA(Ser) + AMP + diphosphate + H(+)</text>
        <dbReference type="Rhea" id="RHEA:12292"/>
        <dbReference type="Rhea" id="RHEA-COMP:9669"/>
        <dbReference type="Rhea" id="RHEA-COMP:9703"/>
        <dbReference type="ChEBI" id="CHEBI:15378"/>
        <dbReference type="ChEBI" id="CHEBI:30616"/>
        <dbReference type="ChEBI" id="CHEBI:33019"/>
        <dbReference type="ChEBI" id="CHEBI:33384"/>
        <dbReference type="ChEBI" id="CHEBI:78442"/>
        <dbReference type="ChEBI" id="CHEBI:78533"/>
        <dbReference type="ChEBI" id="CHEBI:456215"/>
        <dbReference type="EC" id="6.1.1.11"/>
    </reaction>
</comment>
<comment type="catalytic activity">
    <reaction evidence="1">
        <text>tRNA(Sec) + L-serine + ATP = L-seryl-tRNA(Sec) + AMP + diphosphate + H(+)</text>
        <dbReference type="Rhea" id="RHEA:42580"/>
        <dbReference type="Rhea" id="RHEA-COMP:9742"/>
        <dbReference type="Rhea" id="RHEA-COMP:10128"/>
        <dbReference type="ChEBI" id="CHEBI:15378"/>
        <dbReference type="ChEBI" id="CHEBI:30616"/>
        <dbReference type="ChEBI" id="CHEBI:33019"/>
        <dbReference type="ChEBI" id="CHEBI:33384"/>
        <dbReference type="ChEBI" id="CHEBI:78442"/>
        <dbReference type="ChEBI" id="CHEBI:78533"/>
        <dbReference type="ChEBI" id="CHEBI:456215"/>
        <dbReference type="EC" id="6.1.1.11"/>
    </reaction>
</comment>
<comment type="pathway">
    <text evidence="1">Aminoacyl-tRNA biosynthesis; selenocysteinyl-tRNA(Sec) biosynthesis; L-seryl-tRNA(Sec) from L-serine and tRNA(Sec): step 1/1.</text>
</comment>
<comment type="subunit">
    <text evidence="1">Homodimer. The tRNA molecule binds across the dimer.</text>
</comment>
<comment type="subcellular location">
    <subcellularLocation>
        <location evidence="1">Cytoplasm</location>
    </subcellularLocation>
</comment>
<comment type="domain">
    <text evidence="1">Consists of two distinct domains, a catalytic core and a N-terminal extension that is involved in tRNA binding.</text>
</comment>
<comment type="similarity">
    <text evidence="1">Belongs to the class-II aminoacyl-tRNA synthetase family. Type-1 seryl-tRNA synthetase subfamily.</text>
</comment>
<dbReference type="EC" id="6.1.1.11" evidence="1"/>
<dbReference type="EMBL" id="AE004091">
    <property type="protein sequence ID" value="AAG06000.1"/>
    <property type="molecule type" value="Genomic_DNA"/>
</dbReference>
<dbReference type="PIR" id="G83320">
    <property type="entry name" value="G83320"/>
</dbReference>
<dbReference type="RefSeq" id="NP_251302.1">
    <property type="nucleotide sequence ID" value="NC_002516.2"/>
</dbReference>
<dbReference type="RefSeq" id="WP_003097631.1">
    <property type="nucleotide sequence ID" value="NZ_QZGE01000008.1"/>
</dbReference>
<dbReference type="PDB" id="6HDZ">
    <property type="method" value="X-ray"/>
    <property type="resolution" value="2.06 A"/>
    <property type="chains" value="A/B=1-426"/>
</dbReference>
<dbReference type="PDB" id="6HE1">
    <property type="method" value="X-ray"/>
    <property type="resolution" value="2.22 A"/>
    <property type="chains" value="A/B=1-426"/>
</dbReference>
<dbReference type="PDB" id="6HE3">
    <property type="method" value="X-ray"/>
    <property type="resolution" value="2.16 A"/>
    <property type="chains" value="A/B=1-426"/>
</dbReference>
<dbReference type="PDBsum" id="6HDZ"/>
<dbReference type="PDBsum" id="6HE1"/>
<dbReference type="PDBsum" id="6HE3"/>
<dbReference type="SMR" id="Q9I0M6"/>
<dbReference type="FunCoup" id="Q9I0M6">
    <property type="interactions" value="687"/>
</dbReference>
<dbReference type="STRING" id="208964.PA2612"/>
<dbReference type="PaxDb" id="208964-PA2612"/>
<dbReference type="GeneID" id="882318"/>
<dbReference type="KEGG" id="pae:PA2612"/>
<dbReference type="PATRIC" id="fig|208964.12.peg.2733"/>
<dbReference type="PseudoCAP" id="PA2612"/>
<dbReference type="HOGENOM" id="CLU_023797_1_1_6"/>
<dbReference type="InParanoid" id="Q9I0M6"/>
<dbReference type="OrthoDB" id="9804647at2"/>
<dbReference type="PhylomeDB" id="Q9I0M6"/>
<dbReference type="BioCyc" id="PAER208964:G1FZ6-2652-MONOMER"/>
<dbReference type="UniPathway" id="UPA00906">
    <property type="reaction ID" value="UER00895"/>
</dbReference>
<dbReference type="Proteomes" id="UP000002438">
    <property type="component" value="Chromosome"/>
</dbReference>
<dbReference type="GO" id="GO:0005737">
    <property type="term" value="C:cytoplasm"/>
    <property type="evidence" value="ECO:0007669"/>
    <property type="project" value="UniProtKB-SubCell"/>
</dbReference>
<dbReference type="GO" id="GO:0005524">
    <property type="term" value="F:ATP binding"/>
    <property type="evidence" value="ECO:0007669"/>
    <property type="project" value="UniProtKB-UniRule"/>
</dbReference>
<dbReference type="GO" id="GO:0004828">
    <property type="term" value="F:serine-tRNA ligase activity"/>
    <property type="evidence" value="ECO:0007669"/>
    <property type="project" value="UniProtKB-UniRule"/>
</dbReference>
<dbReference type="GO" id="GO:0016260">
    <property type="term" value="P:selenocysteine biosynthetic process"/>
    <property type="evidence" value="ECO:0007669"/>
    <property type="project" value="UniProtKB-UniRule"/>
</dbReference>
<dbReference type="GO" id="GO:0006434">
    <property type="term" value="P:seryl-tRNA aminoacylation"/>
    <property type="evidence" value="ECO:0007669"/>
    <property type="project" value="UniProtKB-UniRule"/>
</dbReference>
<dbReference type="CDD" id="cd00770">
    <property type="entry name" value="SerRS_core"/>
    <property type="match status" value="1"/>
</dbReference>
<dbReference type="Gene3D" id="3.30.930.10">
    <property type="entry name" value="Bira Bifunctional Protein, Domain 2"/>
    <property type="match status" value="1"/>
</dbReference>
<dbReference type="Gene3D" id="1.10.287.40">
    <property type="entry name" value="Serine-tRNA synthetase, tRNA binding domain"/>
    <property type="match status" value="1"/>
</dbReference>
<dbReference type="HAMAP" id="MF_00176">
    <property type="entry name" value="Ser_tRNA_synth_type1"/>
    <property type="match status" value="1"/>
</dbReference>
<dbReference type="InterPro" id="IPR002314">
    <property type="entry name" value="aa-tRNA-synt_IIb"/>
</dbReference>
<dbReference type="InterPro" id="IPR006195">
    <property type="entry name" value="aa-tRNA-synth_II"/>
</dbReference>
<dbReference type="InterPro" id="IPR045864">
    <property type="entry name" value="aa-tRNA-synth_II/BPL/LPL"/>
</dbReference>
<dbReference type="InterPro" id="IPR002317">
    <property type="entry name" value="Ser-tRNA-ligase_type_1"/>
</dbReference>
<dbReference type="InterPro" id="IPR015866">
    <property type="entry name" value="Ser-tRNA-synth_1_N"/>
</dbReference>
<dbReference type="InterPro" id="IPR042103">
    <property type="entry name" value="SerRS_1_N_sf"/>
</dbReference>
<dbReference type="InterPro" id="IPR033729">
    <property type="entry name" value="SerRS_core"/>
</dbReference>
<dbReference type="InterPro" id="IPR010978">
    <property type="entry name" value="tRNA-bd_arm"/>
</dbReference>
<dbReference type="NCBIfam" id="TIGR00414">
    <property type="entry name" value="serS"/>
    <property type="match status" value="1"/>
</dbReference>
<dbReference type="PANTHER" id="PTHR43697:SF1">
    <property type="entry name" value="SERINE--TRNA LIGASE"/>
    <property type="match status" value="1"/>
</dbReference>
<dbReference type="PANTHER" id="PTHR43697">
    <property type="entry name" value="SERYL-TRNA SYNTHETASE"/>
    <property type="match status" value="1"/>
</dbReference>
<dbReference type="Pfam" id="PF02403">
    <property type="entry name" value="Seryl_tRNA_N"/>
    <property type="match status" value="1"/>
</dbReference>
<dbReference type="Pfam" id="PF00587">
    <property type="entry name" value="tRNA-synt_2b"/>
    <property type="match status" value="1"/>
</dbReference>
<dbReference type="PIRSF" id="PIRSF001529">
    <property type="entry name" value="Ser-tRNA-synth_IIa"/>
    <property type="match status" value="1"/>
</dbReference>
<dbReference type="PRINTS" id="PR00981">
    <property type="entry name" value="TRNASYNTHSER"/>
</dbReference>
<dbReference type="SUPFAM" id="SSF55681">
    <property type="entry name" value="Class II aaRS and biotin synthetases"/>
    <property type="match status" value="1"/>
</dbReference>
<dbReference type="SUPFAM" id="SSF46589">
    <property type="entry name" value="tRNA-binding arm"/>
    <property type="match status" value="1"/>
</dbReference>
<dbReference type="PROSITE" id="PS50862">
    <property type="entry name" value="AA_TRNA_LIGASE_II"/>
    <property type="match status" value="1"/>
</dbReference>
<sequence>MLDPKLVRTQPQEVAARLATRGFQLDVARIEALEEQRKSVQTRTEQLQAERNARSKAIGQAKQRGEDIAPLLADVDRMGSELEEGKRQLDAIQGELDAMLLGIPNLPHESVPVGADEDANVEVRRWGTPKTFDFEVKDHVALGERHGWLDFETAAKLSGARFALMRGPIARLHRALAQFMINLHTAEHGYEEAYTPYLVQAPALQGTGQLPKFEEDLFKIGRDGEADLYLIPTAEVSLTNIVSGQILDAKQLPLKFVAHTPCFRSEAGASGRDTRGMIRQHQFDKVEMVQIVDPATSYEALEGLTANAERVLQLLELPYRVLALCTGDMGFGATKTYDLEVWVPSQDKYREISSCSNCGDFQARRMQARYRNPETGKPELVHTLNGSGLAVGRTLVAVLENYQQADGSIRVPEVLKPYMAGIEVIG</sequence>
<name>SYS_PSEAE</name>